<feature type="chain" id="PRO_0000170283" description="Large ribosomal subunit protein bL33c">
    <location>
        <begin position="1"/>
        <end position="56"/>
    </location>
</feature>
<protein>
    <recommendedName>
        <fullName evidence="1">Large ribosomal subunit protein bL33c</fullName>
    </recommendedName>
    <alternativeName>
        <fullName>50S ribosomal protein L33, chloroplastic</fullName>
    </alternativeName>
</protein>
<dbReference type="EMBL" id="AF041468">
    <property type="protein sequence ID" value="AAC35678.1"/>
    <property type="molecule type" value="Genomic_DNA"/>
</dbReference>
<dbReference type="RefSeq" id="NP_050744.1">
    <property type="nucleotide sequence ID" value="NC_000926.1"/>
</dbReference>
<dbReference type="SMR" id="O78487"/>
<dbReference type="GeneID" id="857049"/>
<dbReference type="HOGENOM" id="CLU_190949_3_0_1"/>
<dbReference type="OMA" id="ECTEHKA"/>
<dbReference type="GO" id="GO:0009507">
    <property type="term" value="C:chloroplast"/>
    <property type="evidence" value="ECO:0007669"/>
    <property type="project" value="UniProtKB-SubCell"/>
</dbReference>
<dbReference type="GO" id="GO:1990904">
    <property type="term" value="C:ribonucleoprotein complex"/>
    <property type="evidence" value="ECO:0007669"/>
    <property type="project" value="UniProtKB-KW"/>
</dbReference>
<dbReference type="GO" id="GO:0005840">
    <property type="term" value="C:ribosome"/>
    <property type="evidence" value="ECO:0007669"/>
    <property type="project" value="UniProtKB-KW"/>
</dbReference>
<dbReference type="GO" id="GO:0003735">
    <property type="term" value="F:structural constituent of ribosome"/>
    <property type="evidence" value="ECO:0007669"/>
    <property type="project" value="InterPro"/>
</dbReference>
<dbReference type="GO" id="GO:0006412">
    <property type="term" value="P:translation"/>
    <property type="evidence" value="ECO:0007669"/>
    <property type="project" value="UniProtKB-UniRule"/>
</dbReference>
<dbReference type="Gene3D" id="2.20.28.120">
    <property type="entry name" value="Ribosomal protein L33"/>
    <property type="match status" value="1"/>
</dbReference>
<dbReference type="HAMAP" id="MF_00294">
    <property type="entry name" value="Ribosomal_bL33"/>
    <property type="match status" value="1"/>
</dbReference>
<dbReference type="InterPro" id="IPR001705">
    <property type="entry name" value="Ribosomal_bL33"/>
</dbReference>
<dbReference type="InterPro" id="IPR018264">
    <property type="entry name" value="Ribosomal_bL33_CS"/>
</dbReference>
<dbReference type="InterPro" id="IPR038584">
    <property type="entry name" value="Ribosomal_bL33_sf"/>
</dbReference>
<dbReference type="InterPro" id="IPR011332">
    <property type="entry name" value="Ribosomal_zn-bd"/>
</dbReference>
<dbReference type="NCBIfam" id="NF001764">
    <property type="entry name" value="PRK00504.1"/>
    <property type="match status" value="1"/>
</dbReference>
<dbReference type="NCBIfam" id="NF001860">
    <property type="entry name" value="PRK00595.1"/>
    <property type="match status" value="1"/>
</dbReference>
<dbReference type="NCBIfam" id="TIGR01023">
    <property type="entry name" value="rpmG_bact"/>
    <property type="match status" value="1"/>
</dbReference>
<dbReference type="PANTHER" id="PTHR43168">
    <property type="entry name" value="50S RIBOSOMAL PROTEIN L33, CHLOROPLASTIC"/>
    <property type="match status" value="1"/>
</dbReference>
<dbReference type="PANTHER" id="PTHR43168:SF2">
    <property type="entry name" value="LARGE RIBOSOMAL SUBUNIT PROTEIN BL33C"/>
    <property type="match status" value="1"/>
</dbReference>
<dbReference type="Pfam" id="PF00471">
    <property type="entry name" value="Ribosomal_L33"/>
    <property type="match status" value="1"/>
</dbReference>
<dbReference type="SUPFAM" id="SSF57829">
    <property type="entry name" value="Zn-binding ribosomal proteins"/>
    <property type="match status" value="1"/>
</dbReference>
<dbReference type="PROSITE" id="PS00582">
    <property type="entry name" value="RIBOSOMAL_L33"/>
    <property type="match status" value="1"/>
</dbReference>
<geneLocation type="chloroplast"/>
<reference key="1">
    <citation type="journal article" date="1999" name="J. Mol. Evol.">
        <title>The plastid genome of the cryptophyte alga, Guillardia theta: complete sequence and conserved synteny groups confirm its common ancestry with red algae.</title>
        <authorList>
            <person name="Douglas S.E."/>
            <person name="Penny S.L."/>
        </authorList>
    </citation>
    <scope>NUCLEOTIDE SEQUENCE [LARGE SCALE GENOMIC DNA]</scope>
</reference>
<keyword id="KW-0150">Chloroplast</keyword>
<keyword id="KW-0934">Plastid</keyword>
<keyword id="KW-0687">Ribonucleoprotein</keyword>
<keyword id="KW-0689">Ribosomal protein</keyword>
<proteinExistence type="inferred from homology"/>
<evidence type="ECO:0000305" key="1"/>
<gene>
    <name type="primary">rpl33</name>
</gene>
<sequence>MAKGKGVRIVVTLECKTDQGVYRYHTTKNRRNTPNRIELKKYCPLTQQHEIFKEIK</sequence>
<accession>O78487</accession>
<name>RK33_GUITH</name>
<comment type="subcellular location">
    <subcellularLocation>
        <location>Plastid</location>
        <location>Chloroplast</location>
    </subcellularLocation>
</comment>
<comment type="similarity">
    <text evidence="1">Belongs to the bacterial ribosomal protein bL33 family.</text>
</comment>
<organism>
    <name type="scientific">Guillardia theta</name>
    <name type="common">Cryptophyte</name>
    <name type="synonym">Cryptomonas phi</name>
    <dbReference type="NCBI Taxonomy" id="55529"/>
    <lineage>
        <taxon>Eukaryota</taxon>
        <taxon>Cryptophyceae</taxon>
        <taxon>Pyrenomonadales</taxon>
        <taxon>Geminigeraceae</taxon>
        <taxon>Guillardia</taxon>
    </lineage>
</organism>